<reference key="1">
    <citation type="journal article" date="2010" name="PLoS ONE">
        <title>The complete genome sequence of Cupriavidus metallidurans strain CH34, a master survivalist in harsh and anthropogenic environments.</title>
        <authorList>
            <person name="Janssen P.J."/>
            <person name="Van Houdt R."/>
            <person name="Moors H."/>
            <person name="Monsieurs P."/>
            <person name="Morin N."/>
            <person name="Michaux A."/>
            <person name="Benotmane M.A."/>
            <person name="Leys N."/>
            <person name="Vallaeys T."/>
            <person name="Lapidus A."/>
            <person name="Monchy S."/>
            <person name="Medigue C."/>
            <person name="Taghavi S."/>
            <person name="McCorkle S."/>
            <person name="Dunn J."/>
            <person name="van der Lelie D."/>
            <person name="Mergeay M."/>
        </authorList>
    </citation>
    <scope>NUCLEOTIDE SEQUENCE [LARGE SCALE GENOMIC DNA]</scope>
    <source>
        <strain>ATCC 43123 / DSM 2839 / NBRC 102507 / CH34</strain>
    </source>
</reference>
<gene>
    <name evidence="1" type="primary">clpX</name>
    <name type="ordered locus">Rmet_1884</name>
</gene>
<protein>
    <recommendedName>
        <fullName evidence="1">ATP-dependent Clp protease ATP-binding subunit ClpX</fullName>
    </recommendedName>
</protein>
<proteinExistence type="inferred from homology"/>
<sequence length="425" mass="46627">MADKKGSSSEKLLYCSFCGKSQHEVKKLIAGPSVFICDECIDLCNEIIRDEASATDKDATAATRSDLPTPHEIRESLDQYVIGQDQAKKILAVAVYNHYKRLKHLGKKDDVELSKSNILLIGPTGSGKTLLAQTLARLLNVPFVIADATTLTEAGYVGEDVENIIQKLLQNCNYEVEKAQRGIVYIDEIDKISRKSDNPSITRDVSGEGVQQALLKLIEGTMASVPPQGGRKHPNQDFLQVDTTNILFICGGAFDGLEKVIMQRSDKTGIGFAAQVQSKEEREVSEVLPQTEPEDLIKFGLIPELIGRLPVVATLAKLDEAALMQILIEPKNALVKQYQKLLAMEGVELEIRPAALSAIARKAIRRKTGARGLRSILEQSLMDVMYDLPNYKGVQKVVIDENTITGDAAPLLVYEEQQPKVAGSN</sequence>
<comment type="function">
    <text evidence="1">ATP-dependent specificity component of the Clp protease. It directs the protease to specific substrates. Can perform chaperone functions in the absence of ClpP.</text>
</comment>
<comment type="subunit">
    <text evidence="1">Component of the ClpX-ClpP complex. Forms a hexameric ring that, in the presence of ATP, binds to fourteen ClpP subunits assembled into a disk-like structure with a central cavity, resembling the structure of eukaryotic proteasomes.</text>
</comment>
<comment type="similarity">
    <text evidence="1">Belongs to the ClpX chaperone family.</text>
</comment>
<dbReference type="EMBL" id="CP000352">
    <property type="protein sequence ID" value="ABF08763.1"/>
    <property type="molecule type" value="Genomic_DNA"/>
</dbReference>
<dbReference type="RefSeq" id="WP_011516610.1">
    <property type="nucleotide sequence ID" value="NC_007973.1"/>
</dbReference>
<dbReference type="SMR" id="Q1LM63"/>
<dbReference type="STRING" id="266264.Rmet_1884"/>
<dbReference type="KEGG" id="rme:Rmet_1884"/>
<dbReference type="eggNOG" id="COG1219">
    <property type="taxonomic scope" value="Bacteria"/>
</dbReference>
<dbReference type="HOGENOM" id="CLU_014218_8_2_4"/>
<dbReference type="Proteomes" id="UP000002429">
    <property type="component" value="Chromosome"/>
</dbReference>
<dbReference type="GO" id="GO:0009376">
    <property type="term" value="C:HslUV protease complex"/>
    <property type="evidence" value="ECO:0007669"/>
    <property type="project" value="TreeGrafter"/>
</dbReference>
<dbReference type="GO" id="GO:0005524">
    <property type="term" value="F:ATP binding"/>
    <property type="evidence" value="ECO:0007669"/>
    <property type="project" value="UniProtKB-UniRule"/>
</dbReference>
<dbReference type="GO" id="GO:0016887">
    <property type="term" value="F:ATP hydrolysis activity"/>
    <property type="evidence" value="ECO:0007669"/>
    <property type="project" value="InterPro"/>
</dbReference>
<dbReference type="GO" id="GO:0140662">
    <property type="term" value="F:ATP-dependent protein folding chaperone"/>
    <property type="evidence" value="ECO:0007669"/>
    <property type="project" value="InterPro"/>
</dbReference>
<dbReference type="GO" id="GO:0046983">
    <property type="term" value="F:protein dimerization activity"/>
    <property type="evidence" value="ECO:0007669"/>
    <property type="project" value="InterPro"/>
</dbReference>
<dbReference type="GO" id="GO:0051082">
    <property type="term" value="F:unfolded protein binding"/>
    <property type="evidence" value="ECO:0007669"/>
    <property type="project" value="UniProtKB-UniRule"/>
</dbReference>
<dbReference type="GO" id="GO:0008270">
    <property type="term" value="F:zinc ion binding"/>
    <property type="evidence" value="ECO:0007669"/>
    <property type="project" value="InterPro"/>
</dbReference>
<dbReference type="GO" id="GO:0051301">
    <property type="term" value="P:cell division"/>
    <property type="evidence" value="ECO:0007669"/>
    <property type="project" value="TreeGrafter"/>
</dbReference>
<dbReference type="GO" id="GO:0051603">
    <property type="term" value="P:proteolysis involved in protein catabolic process"/>
    <property type="evidence" value="ECO:0007669"/>
    <property type="project" value="TreeGrafter"/>
</dbReference>
<dbReference type="CDD" id="cd19497">
    <property type="entry name" value="RecA-like_ClpX"/>
    <property type="match status" value="1"/>
</dbReference>
<dbReference type="FunFam" id="1.10.8.60:FF:000002">
    <property type="entry name" value="ATP-dependent Clp protease ATP-binding subunit ClpX"/>
    <property type="match status" value="1"/>
</dbReference>
<dbReference type="FunFam" id="3.40.50.300:FF:000005">
    <property type="entry name" value="ATP-dependent Clp protease ATP-binding subunit ClpX"/>
    <property type="match status" value="1"/>
</dbReference>
<dbReference type="Gene3D" id="1.10.8.60">
    <property type="match status" value="1"/>
</dbReference>
<dbReference type="Gene3D" id="6.20.220.10">
    <property type="entry name" value="ClpX chaperone, C4-type zinc finger domain"/>
    <property type="match status" value="1"/>
</dbReference>
<dbReference type="Gene3D" id="3.40.50.300">
    <property type="entry name" value="P-loop containing nucleotide triphosphate hydrolases"/>
    <property type="match status" value="1"/>
</dbReference>
<dbReference type="HAMAP" id="MF_00175">
    <property type="entry name" value="ClpX"/>
    <property type="match status" value="1"/>
</dbReference>
<dbReference type="InterPro" id="IPR003593">
    <property type="entry name" value="AAA+_ATPase"/>
</dbReference>
<dbReference type="InterPro" id="IPR050052">
    <property type="entry name" value="ATP-dep_Clp_protease_ClpX"/>
</dbReference>
<dbReference type="InterPro" id="IPR003959">
    <property type="entry name" value="ATPase_AAA_core"/>
</dbReference>
<dbReference type="InterPro" id="IPR019489">
    <property type="entry name" value="Clp_ATPase_C"/>
</dbReference>
<dbReference type="InterPro" id="IPR004487">
    <property type="entry name" value="Clp_protease_ATP-bd_su_ClpX"/>
</dbReference>
<dbReference type="InterPro" id="IPR046425">
    <property type="entry name" value="ClpX_bact"/>
</dbReference>
<dbReference type="InterPro" id="IPR027417">
    <property type="entry name" value="P-loop_NTPase"/>
</dbReference>
<dbReference type="InterPro" id="IPR010603">
    <property type="entry name" value="Znf_CppX_C4"/>
</dbReference>
<dbReference type="InterPro" id="IPR038366">
    <property type="entry name" value="Znf_CppX_C4_sf"/>
</dbReference>
<dbReference type="NCBIfam" id="TIGR00382">
    <property type="entry name" value="clpX"/>
    <property type="match status" value="1"/>
</dbReference>
<dbReference type="NCBIfam" id="NF003745">
    <property type="entry name" value="PRK05342.1"/>
    <property type="match status" value="1"/>
</dbReference>
<dbReference type="PANTHER" id="PTHR48102:SF7">
    <property type="entry name" value="ATP-DEPENDENT CLP PROTEASE ATP-BINDING SUBUNIT CLPX-LIKE, MITOCHONDRIAL"/>
    <property type="match status" value="1"/>
</dbReference>
<dbReference type="PANTHER" id="PTHR48102">
    <property type="entry name" value="ATP-DEPENDENT CLP PROTEASE ATP-BINDING SUBUNIT CLPX-LIKE, MITOCHONDRIAL-RELATED"/>
    <property type="match status" value="1"/>
</dbReference>
<dbReference type="Pfam" id="PF07724">
    <property type="entry name" value="AAA_2"/>
    <property type="match status" value="1"/>
</dbReference>
<dbReference type="Pfam" id="PF10431">
    <property type="entry name" value="ClpB_D2-small"/>
    <property type="match status" value="1"/>
</dbReference>
<dbReference type="Pfam" id="PF06689">
    <property type="entry name" value="zf-C4_ClpX"/>
    <property type="match status" value="1"/>
</dbReference>
<dbReference type="SMART" id="SM00382">
    <property type="entry name" value="AAA"/>
    <property type="match status" value="1"/>
</dbReference>
<dbReference type="SMART" id="SM01086">
    <property type="entry name" value="ClpB_D2-small"/>
    <property type="match status" value="1"/>
</dbReference>
<dbReference type="SMART" id="SM00994">
    <property type="entry name" value="zf-C4_ClpX"/>
    <property type="match status" value="1"/>
</dbReference>
<dbReference type="SUPFAM" id="SSF57716">
    <property type="entry name" value="Glucocorticoid receptor-like (DNA-binding domain)"/>
    <property type="match status" value="1"/>
</dbReference>
<dbReference type="SUPFAM" id="SSF52540">
    <property type="entry name" value="P-loop containing nucleoside triphosphate hydrolases"/>
    <property type="match status" value="1"/>
</dbReference>
<dbReference type="PROSITE" id="PS51902">
    <property type="entry name" value="CLPX_ZB"/>
    <property type="match status" value="1"/>
</dbReference>
<accession>Q1LM63</accession>
<organism>
    <name type="scientific">Cupriavidus metallidurans (strain ATCC 43123 / DSM 2839 / NBRC 102507 / CH34)</name>
    <name type="common">Ralstonia metallidurans</name>
    <dbReference type="NCBI Taxonomy" id="266264"/>
    <lineage>
        <taxon>Bacteria</taxon>
        <taxon>Pseudomonadati</taxon>
        <taxon>Pseudomonadota</taxon>
        <taxon>Betaproteobacteria</taxon>
        <taxon>Burkholderiales</taxon>
        <taxon>Burkholderiaceae</taxon>
        <taxon>Cupriavidus</taxon>
    </lineage>
</organism>
<feature type="chain" id="PRO_1000024629" description="ATP-dependent Clp protease ATP-binding subunit ClpX">
    <location>
        <begin position="1"/>
        <end position="425"/>
    </location>
</feature>
<feature type="domain" description="ClpX-type ZB" evidence="2">
    <location>
        <begin position="3"/>
        <end position="56"/>
    </location>
</feature>
<feature type="binding site" evidence="2">
    <location>
        <position position="15"/>
    </location>
    <ligand>
        <name>Zn(2+)</name>
        <dbReference type="ChEBI" id="CHEBI:29105"/>
    </ligand>
</feature>
<feature type="binding site" evidence="2">
    <location>
        <position position="18"/>
    </location>
    <ligand>
        <name>Zn(2+)</name>
        <dbReference type="ChEBI" id="CHEBI:29105"/>
    </ligand>
</feature>
<feature type="binding site" evidence="2">
    <location>
        <position position="37"/>
    </location>
    <ligand>
        <name>Zn(2+)</name>
        <dbReference type="ChEBI" id="CHEBI:29105"/>
    </ligand>
</feature>
<feature type="binding site" evidence="2">
    <location>
        <position position="40"/>
    </location>
    <ligand>
        <name>Zn(2+)</name>
        <dbReference type="ChEBI" id="CHEBI:29105"/>
    </ligand>
</feature>
<feature type="binding site" evidence="1">
    <location>
        <begin position="123"/>
        <end position="130"/>
    </location>
    <ligand>
        <name>ATP</name>
        <dbReference type="ChEBI" id="CHEBI:30616"/>
    </ligand>
</feature>
<evidence type="ECO:0000255" key="1">
    <source>
        <dbReference type="HAMAP-Rule" id="MF_00175"/>
    </source>
</evidence>
<evidence type="ECO:0000255" key="2">
    <source>
        <dbReference type="PROSITE-ProRule" id="PRU01250"/>
    </source>
</evidence>
<name>CLPX_CUPMC</name>
<keyword id="KW-0067">ATP-binding</keyword>
<keyword id="KW-0143">Chaperone</keyword>
<keyword id="KW-0479">Metal-binding</keyword>
<keyword id="KW-0547">Nucleotide-binding</keyword>
<keyword id="KW-1185">Reference proteome</keyword>
<keyword id="KW-0862">Zinc</keyword>